<organism>
    <name type="scientific">Daucus carota</name>
    <name type="common">Wild carrot</name>
    <dbReference type="NCBI Taxonomy" id="4039"/>
    <lineage>
        <taxon>Eukaryota</taxon>
        <taxon>Viridiplantae</taxon>
        <taxon>Streptophyta</taxon>
        <taxon>Embryophyta</taxon>
        <taxon>Tracheophyta</taxon>
        <taxon>Spermatophyta</taxon>
        <taxon>Magnoliopsida</taxon>
        <taxon>eudicotyledons</taxon>
        <taxon>Gunneridae</taxon>
        <taxon>Pentapetalae</taxon>
        <taxon>asterids</taxon>
        <taxon>campanulids</taxon>
        <taxon>Apiales</taxon>
        <taxon>Apiaceae</taxon>
        <taxon>Apioideae</taxon>
        <taxon>Scandiceae</taxon>
        <taxon>Daucinae</taxon>
        <taxon>Daucus</taxon>
        <taxon>Daucus sect. Daucus</taxon>
    </lineage>
</organism>
<accession>Q0G9Y1</accession>
<dbReference type="EMBL" id="DQ898156">
    <property type="protein sequence ID" value="ABI32405.1"/>
    <property type="molecule type" value="Genomic_DNA"/>
</dbReference>
<dbReference type="RefSeq" id="YP_740098.1">
    <property type="nucleotide sequence ID" value="NC_008325.1"/>
</dbReference>
<dbReference type="GeneID" id="4266703"/>
<dbReference type="OMA" id="RVWYLDI"/>
<dbReference type="GO" id="GO:0009507">
    <property type="term" value="C:chloroplast"/>
    <property type="evidence" value="ECO:0007669"/>
    <property type="project" value="UniProtKB-SubCell"/>
</dbReference>
<dbReference type="GO" id="GO:0003723">
    <property type="term" value="F:RNA binding"/>
    <property type="evidence" value="ECO:0007669"/>
    <property type="project" value="UniProtKB-KW"/>
</dbReference>
<dbReference type="GO" id="GO:0006397">
    <property type="term" value="P:mRNA processing"/>
    <property type="evidence" value="ECO:0007669"/>
    <property type="project" value="UniProtKB-KW"/>
</dbReference>
<dbReference type="GO" id="GO:0008380">
    <property type="term" value="P:RNA splicing"/>
    <property type="evidence" value="ECO:0007669"/>
    <property type="project" value="UniProtKB-UniRule"/>
</dbReference>
<dbReference type="GO" id="GO:0008033">
    <property type="term" value="P:tRNA processing"/>
    <property type="evidence" value="ECO:0007669"/>
    <property type="project" value="UniProtKB-KW"/>
</dbReference>
<dbReference type="HAMAP" id="MF_01390">
    <property type="entry name" value="MatK"/>
    <property type="match status" value="1"/>
</dbReference>
<dbReference type="InterPro" id="IPR024937">
    <property type="entry name" value="Domain_X"/>
</dbReference>
<dbReference type="InterPro" id="IPR002866">
    <property type="entry name" value="Maturase_MatK"/>
</dbReference>
<dbReference type="InterPro" id="IPR024942">
    <property type="entry name" value="Maturase_MatK_N"/>
</dbReference>
<dbReference type="PANTHER" id="PTHR34811">
    <property type="entry name" value="MATURASE K"/>
    <property type="match status" value="1"/>
</dbReference>
<dbReference type="PANTHER" id="PTHR34811:SF1">
    <property type="entry name" value="MATURASE K"/>
    <property type="match status" value="1"/>
</dbReference>
<dbReference type="Pfam" id="PF01348">
    <property type="entry name" value="Intron_maturas2"/>
    <property type="match status" value="1"/>
</dbReference>
<dbReference type="Pfam" id="PF01824">
    <property type="entry name" value="MatK_N"/>
    <property type="match status" value="1"/>
</dbReference>
<proteinExistence type="inferred from homology"/>
<reference key="1">
    <citation type="journal article" date="2006" name="BMC Genomics">
        <title>Complete plastid genome sequence of Daucus carota: implications for biotechnology and phylogeny of angiosperms.</title>
        <authorList>
            <person name="Ruhlman T."/>
            <person name="Lee S.-B."/>
            <person name="Jansen R.K."/>
            <person name="Hostetler J.B."/>
            <person name="Tallon L.J."/>
            <person name="Town C.D."/>
            <person name="Daniell H."/>
        </authorList>
    </citation>
    <scope>NUCLEOTIDE SEQUENCE [LARGE SCALE GENOMIC DNA]</scope>
    <source>
        <strain>cv. Danvers Half-long</strain>
    </source>
</reference>
<sequence length="512" mass="60546">MEEFQRYLKLNRSQQHYFLYPLIFQEYIYALAHDHGLNRNRSIFLENVGYNKFSLLIVKRAIERMYQYEQKHLILFDNDFNQNRFFGRNNNFSFQMISEGFAVIVEIPFYLRLLSSLEKKGIVKSNNLRSIHSIFPFLEDNFSHLIYVLEILIPYPAHLEILIQTLRYWVKDASSLHLLRFFLHEYRSWNTPNKASSFFSKRNQRFFFVLYNSHICEYESIFVFLRNQSSHLCSTSSGTLLERIYFYGKLEHLVLVEAFAKAFQANLWLFKDPFMHYVRYQGKSILASKGTPPLMKKWTYYFVNLWECRFYLWSQPGRICINQLYNNSLSLLGYISSAGLNPSMVRSQMLENAFIIDNPIKKFDTLVPIVPLIGSLAKARFCNVLGHPISKAVWTDLSDSDIIVRFGRICRNLSHFFSGSSQKKSLYRIKYILRLSCARTLARKHKSTVRAFLKRSGSGLLEEFFTAEEQVLYLTFPRASSTSHRLYRRRIWYLDIICINDLASHELNDSLV</sequence>
<protein>
    <recommendedName>
        <fullName evidence="1">Maturase K</fullName>
    </recommendedName>
    <alternativeName>
        <fullName evidence="1">Intron maturase</fullName>
    </alternativeName>
</protein>
<geneLocation type="chloroplast"/>
<name>MATK_DAUCA</name>
<feature type="chain" id="PRO_0000355930" description="Maturase K">
    <location>
        <begin position="1"/>
        <end position="512"/>
    </location>
</feature>
<comment type="function">
    <text evidence="1">Usually encoded in the trnK tRNA gene intron. Probably assists in splicing its own and other chloroplast group II introns.</text>
</comment>
<comment type="subcellular location">
    <subcellularLocation>
        <location>Plastid</location>
        <location>Chloroplast</location>
    </subcellularLocation>
</comment>
<comment type="similarity">
    <text evidence="1">Belongs to the intron maturase 2 family. MatK subfamily.</text>
</comment>
<evidence type="ECO:0000255" key="1">
    <source>
        <dbReference type="HAMAP-Rule" id="MF_01390"/>
    </source>
</evidence>
<gene>
    <name evidence="1" type="primary">matK</name>
</gene>
<keyword id="KW-0150">Chloroplast</keyword>
<keyword id="KW-0507">mRNA processing</keyword>
<keyword id="KW-0934">Plastid</keyword>
<keyword id="KW-0694">RNA-binding</keyword>
<keyword id="KW-0819">tRNA processing</keyword>